<accession>A4UHS8</accession>
<protein>
    <recommendedName>
        <fullName evidence="2">Versicolorin B synthase</fullName>
        <ecNumber evidence="2">4.2.1.143</ecNumber>
    </recommendedName>
    <alternativeName>
        <fullName evidence="2">5'-oxoaverantin cyclase</fullName>
        <ecNumber evidence="2">4.2.1.142</ecNumber>
    </alternativeName>
    <alternativeName>
        <fullName evidence="11">Dothistromin biosynthesis protein vbsA</fullName>
    </alternativeName>
</protein>
<evidence type="ECO:0000250" key="1">
    <source>
        <dbReference type="UniProtKB" id="E4QP00"/>
    </source>
</evidence>
<evidence type="ECO:0000250" key="2">
    <source>
        <dbReference type="UniProtKB" id="Q12062"/>
    </source>
</evidence>
<evidence type="ECO:0000255" key="3"/>
<evidence type="ECO:0000255" key="4">
    <source>
        <dbReference type="PROSITE-ProRule" id="PRU00498"/>
    </source>
</evidence>
<evidence type="ECO:0000269" key="5">
    <source>
    </source>
</evidence>
<evidence type="ECO:0000269" key="6">
    <source>
    </source>
</evidence>
<evidence type="ECO:0000269" key="7">
    <source>
    </source>
</evidence>
<evidence type="ECO:0000269" key="8">
    <source>
    </source>
</evidence>
<evidence type="ECO:0000269" key="9">
    <source>
    </source>
</evidence>
<evidence type="ECO:0000269" key="10">
    <source>
    </source>
</evidence>
<evidence type="ECO:0000303" key="11">
    <source>
    </source>
</evidence>
<evidence type="ECO:0000303" key="12">
    <source>
    </source>
</evidence>
<evidence type="ECO:0000305" key="13"/>
<evidence type="ECO:0000305" key="14">
    <source>
    </source>
</evidence>
<evidence type="ECO:0000305" key="15">
    <source>
    </source>
</evidence>
<evidence type="ECO:0000305" key="16">
    <source>
    </source>
</evidence>
<evidence type="ECO:0000312" key="17">
    <source>
        <dbReference type="EMBL" id="ABO72541.2"/>
    </source>
</evidence>
<dbReference type="EC" id="4.2.1.143" evidence="2"/>
<dbReference type="EC" id="4.2.1.142" evidence="2"/>
<dbReference type="EMBL" id="EF177826">
    <property type="protein sequence ID" value="ABO72541.2"/>
    <property type="molecule type" value="Genomic_DNA"/>
</dbReference>
<dbReference type="SMR" id="A4UHS8"/>
<dbReference type="GlyCosmos" id="A4UHS8">
    <property type="glycosylation" value="3 sites, No reported glycans"/>
</dbReference>
<dbReference type="OMA" id="REMFYMQ"/>
<dbReference type="GO" id="GO:0005829">
    <property type="term" value="C:cytosol"/>
    <property type="evidence" value="ECO:0007669"/>
    <property type="project" value="UniProtKB-SubCell"/>
</dbReference>
<dbReference type="GO" id="GO:0050660">
    <property type="term" value="F:flavin adenine dinucleotide binding"/>
    <property type="evidence" value="ECO:0007669"/>
    <property type="project" value="InterPro"/>
</dbReference>
<dbReference type="GO" id="GO:0016614">
    <property type="term" value="F:oxidoreductase activity, acting on CH-OH group of donors"/>
    <property type="evidence" value="ECO:0007669"/>
    <property type="project" value="InterPro"/>
</dbReference>
<dbReference type="GO" id="GO:0046572">
    <property type="term" value="F:versicolorin B synthase activity"/>
    <property type="evidence" value="ECO:0007669"/>
    <property type="project" value="UniProtKB-EC"/>
</dbReference>
<dbReference type="GO" id="GO:0044550">
    <property type="term" value="P:secondary metabolite biosynthetic process"/>
    <property type="evidence" value="ECO:0007669"/>
    <property type="project" value="TreeGrafter"/>
</dbReference>
<dbReference type="Gene3D" id="3.50.50.60">
    <property type="entry name" value="FAD/NAD(P)-binding domain"/>
    <property type="match status" value="1"/>
</dbReference>
<dbReference type="Gene3D" id="3.30.560.10">
    <property type="entry name" value="Glucose Oxidase, domain 3"/>
    <property type="match status" value="1"/>
</dbReference>
<dbReference type="InterPro" id="IPR036188">
    <property type="entry name" value="FAD/NAD-bd_sf"/>
</dbReference>
<dbReference type="InterPro" id="IPR012132">
    <property type="entry name" value="GMC_OxRdtase"/>
</dbReference>
<dbReference type="InterPro" id="IPR000172">
    <property type="entry name" value="GMC_OxRdtase_N"/>
</dbReference>
<dbReference type="InterPro" id="IPR007867">
    <property type="entry name" value="GMC_OxRtase_C"/>
</dbReference>
<dbReference type="PANTHER" id="PTHR11552:SF138">
    <property type="entry name" value="DEHYDROGENASE PKFF-RELATED"/>
    <property type="match status" value="1"/>
</dbReference>
<dbReference type="PANTHER" id="PTHR11552">
    <property type="entry name" value="GLUCOSE-METHANOL-CHOLINE GMC OXIDOREDUCTASE"/>
    <property type="match status" value="1"/>
</dbReference>
<dbReference type="Pfam" id="PF05199">
    <property type="entry name" value="GMC_oxred_C"/>
    <property type="match status" value="1"/>
</dbReference>
<dbReference type="Pfam" id="PF00732">
    <property type="entry name" value="GMC_oxred_N"/>
    <property type="match status" value="1"/>
</dbReference>
<dbReference type="PIRSF" id="PIRSF000137">
    <property type="entry name" value="Alcohol_oxidase"/>
    <property type="match status" value="1"/>
</dbReference>
<dbReference type="SUPFAM" id="SSF54373">
    <property type="entry name" value="FAD-linked reductases, C-terminal domain"/>
    <property type="match status" value="1"/>
</dbReference>
<dbReference type="SUPFAM" id="SSF51905">
    <property type="entry name" value="FAD/NAD(P)-binding domain"/>
    <property type="match status" value="1"/>
</dbReference>
<gene>
    <name evidence="11" type="primary">vbsA</name>
</gene>
<organism evidence="17">
    <name type="scientific">Dothistroma septosporum</name>
    <name type="common">Red band needle blight fungus</name>
    <name type="synonym">Mycosphaerella pini</name>
    <dbReference type="NCBI Taxonomy" id="64363"/>
    <lineage>
        <taxon>Eukaryota</taxon>
        <taxon>Fungi</taxon>
        <taxon>Dikarya</taxon>
        <taxon>Ascomycota</taxon>
        <taxon>Pezizomycotina</taxon>
        <taxon>Dothideomycetes</taxon>
        <taxon>Dothideomycetidae</taxon>
        <taxon>Mycosphaerellales</taxon>
        <taxon>Mycosphaerellaceae</taxon>
        <taxon>Dothistroma</taxon>
    </lineage>
</organism>
<sequence length="647" mass="70966">MALSTILTAAAMPVAGLFAFAQQSSAFFDQIPVLGSMLNSPVGTYDAQAAQMDGRIQARDLLSSHFGPVGWPHQSFDYVIVGGGTAGLAMAKRLSEEEGNSVALIEAGGFYEMDAGNATEVPMYLFNYFFDNGYMKNPLFDWYQYTEPQEGLHNREMFYMQGKTLGGSTARGAMLYHRGSKGAYQKWADEVGDDSYTWEKWLPHFQRGIKFSGPNTNPRPANATAVNDDKAWSASGGPVHVAYPYLTNAISSWVDKALDSFGFSNVQGFSNGVLLGKSYITHTINPFTRRRETASSSYLREALVESNNLNIYIRTLAKKVLFDENKKANAVEVQTDGFKWKIEAKKEVILSAGVMRSPQLLMVSGIGPKETLEKLDIPVLSDRPGVGQNMQDTIILGPTNPIRVESHSQLLGGKDTLPRSIDDYNNHRTGLLTNPGQDFFAFEKHAEEGPGSLSKETAADIDANFPADWPTYSFIALDDTFVPQFNGKNYFSMSAALMTTFSRGYVSINSTDTLDNPIVDPKWLSDPRDQEMAVAAFRRCRQFTQHEILQDVIDGEELLPGKKYQTDDEVLGYIAETSDAYYAGVGTAAMGKKDDPKAVLDSKARVLGVQGLRVVDASSFPFAIDGQPMGTVYALAEKIAADIIAGN</sequence>
<keyword id="KW-0963">Cytoplasm</keyword>
<keyword id="KW-0274">FAD</keyword>
<keyword id="KW-0285">Flavoprotein</keyword>
<keyword id="KW-0325">Glycoprotein</keyword>
<keyword id="KW-0456">Lyase</keyword>
<keyword id="KW-0732">Signal</keyword>
<reference key="1">
    <citation type="journal article" date="2007" name="Fungal Genet. Biol.">
        <title>A fragmented aflatoxin-like gene cluster in the forest pathogen Dothistroma septosporum.</title>
        <authorList>
            <person name="Zhang S."/>
            <person name="Schwelm A."/>
            <person name="Jin H."/>
            <person name="Collins L.J."/>
            <person name="Bradshaw R.E."/>
        </authorList>
    </citation>
    <scope>NUCLEOTIDE SEQUENCE [GENOMIC DNA]</scope>
    <scope>DISRUPTION PHENOTYPE</scope>
    <scope>FUNCTION</scope>
    <scope>INDUCTION</scope>
    <source>
        <strain>NZE7</strain>
    </source>
</reference>
<reference key="2">
    <citation type="journal article" date="2008" name="Mycol. Res.">
        <title>Early expression of aflatoxin-like dothistromin genes in the forest pathogen Dothistroma septosporum.</title>
        <authorList>
            <person name="Schwelm A."/>
            <person name="Barron N.J."/>
            <person name="Zhang S."/>
            <person name="Bradshaw R.E."/>
        </authorList>
    </citation>
    <scope>NUCLEOTIDE SEQUENCE [GENOMIC DNA] OF 139-150 AND 151-571</scope>
    <scope>INDUCTION</scope>
</reference>
<reference key="3">
    <citation type="journal article" date="2002" name="Appl. Environ. Microbiol.">
        <title>Dothistroma pini, a forest pathogen, contains homologs of aflatoxin biosynthetic pathway genes.</title>
        <authorList>
            <person name="Bradshaw R.E."/>
            <person name="Bhatnagar D."/>
            <person name="Ganley R.J."/>
            <person name="Gillman C.J."/>
            <person name="Monahan B.J."/>
            <person name="Seconi J.M."/>
        </authorList>
    </citation>
    <scope>FUNCTION</scope>
</reference>
<reference key="4">
    <citation type="journal article" date="2006" name="Mycopathologia">
        <title>A polyketide synthase gene required for biosynthesis of the aflatoxin-like toxin, dothistromin.</title>
        <authorList>
            <person name="Bradshaw R.E."/>
            <person name="Jin H."/>
            <person name="Morgan B.S."/>
            <person name="Schwelm A."/>
            <person name="Teddy O.R."/>
            <person name="Young C.A."/>
            <person name="Zhang S."/>
        </authorList>
    </citation>
    <scope>FUNCTION</scope>
</reference>
<reference key="5">
    <citation type="journal article" date="2009" name="Toxins">
        <title>Functional analysis of a putative dothistromin toxin MFS transporter gene.</title>
        <authorList>
            <person name="Bradshaw R.E."/>
            <person name="Feng Z."/>
            <person name="Schwelm A."/>
            <person name="Yang Y."/>
            <person name="Zhang S."/>
        </authorList>
    </citation>
    <scope>SUBCELLULAR LOCATION</scope>
</reference>
<reference key="6">
    <citation type="journal article" date="2010" name="Toxins">
        <title>Genetics of dothistromin biosynthesis of Dothistroma septosporum: an update.</title>
        <authorList>
            <person name="Schwelm A."/>
            <person name="Bradshaw R.E."/>
        </authorList>
    </citation>
    <scope>REVIEW ON FUNCTION</scope>
    <scope>PATHWAY</scope>
</reference>
<reference key="7">
    <citation type="journal article" date="2013" name="Fungal Genet. Biol.">
        <title>Dothistromin genes at multiple separate loci are regulated by AflR.</title>
        <authorList>
            <person name="Chettri P."/>
            <person name="Ehrlich K.C."/>
            <person name="Cary J.W."/>
            <person name="Collemare J."/>
            <person name="Cox M.P."/>
            <person name="Griffiths S.A."/>
            <person name="Olson M.A."/>
            <person name="de Wit P.J."/>
            <person name="Bradshaw R.E."/>
        </authorList>
    </citation>
    <scope>FUNCTION</scope>
    <scope>INDUCTION</scope>
    <scope>PATHWAY</scope>
</reference>
<reference key="8">
    <citation type="journal article" date="2013" name="New Phytol.">
        <title>Fragmentation of an aflatoxin-like gene cluster in a forest pathogen.</title>
        <authorList>
            <person name="Bradshaw R.E."/>
            <person name="Slot J.C."/>
            <person name="Moore G.G."/>
            <person name="Chettri P."/>
            <person name="de Wit P.J."/>
            <person name="Ehrlich K.C."/>
            <person name="Ganley A.R."/>
            <person name="Olson M.A."/>
            <person name="Rokas A."/>
            <person name="Carbone I."/>
            <person name="Cox M.P."/>
        </authorList>
    </citation>
    <scope>FUNCTION</scope>
</reference>
<reference key="9">
    <citation type="journal article" date="2015" name="Fungal Biol.">
        <title>Regulation of the aflatoxin-like toxin dothistromin by AflJ.</title>
        <authorList>
            <person name="Chettri P."/>
            <person name="Ehrlich K.C."/>
            <person name="Bradshaw R.E."/>
        </authorList>
    </citation>
    <scope>INDUCTION</scope>
</reference>
<feature type="signal peptide" evidence="3">
    <location>
        <begin position="1"/>
        <end position="26"/>
    </location>
</feature>
<feature type="chain" id="PRO_5002674584" description="Versicolorin B synthase">
    <location>
        <begin position="27"/>
        <end position="647"/>
    </location>
</feature>
<feature type="binding site" evidence="1">
    <location>
        <begin position="85"/>
        <end position="86"/>
    </location>
    <ligand>
        <name>FAD</name>
        <dbReference type="ChEBI" id="CHEBI:57692"/>
    </ligand>
</feature>
<feature type="binding site" evidence="1">
    <location>
        <begin position="106"/>
        <end position="107"/>
    </location>
    <ligand>
        <name>FAD</name>
        <dbReference type="ChEBI" id="CHEBI:57692"/>
    </ligand>
</feature>
<feature type="binding site" evidence="1">
    <location>
        <begin position="172"/>
        <end position="175"/>
    </location>
    <ligand>
        <name>FAD</name>
        <dbReference type="ChEBI" id="CHEBI:57692"/>
    </ligand>
</feature>
<feature type="binding site" evidence="1">
    <location>
        <position position="617"/>
    </location>
    <ligand>
        <name>FAD</name>
        <dbReference type="ChEBI" id="CHEBI:57692"/>
    </ligand>
</feature>
<feature type="binding site" evidence="1">
    <location>
        <begin position="628"/>
        <end position="629"/>
    </location>
    <ligand>
        <name>FAD</name>
        <dbReference type="ChEBI" id="CHEBI:57692"/>
    </ligand>
</feature>
<feature type="glycosylation site" description="N-linked (GlcNAc...) asparagine" evidence="4">
    <location>
        <position position="117"/>
    </location>
</feature>
<feature type="glycosylation site" description="N-linked (GlcNAc...) asparagine" evidence="4">
    <location>
        <position position="222"/>
    </location>
</feature>
<feature type="glycosylation site" description="N-linked (GlcNAc...) asparagine" evidence="4">
    <location>
        <position position="509"/>
    </location>
</feature>
<proteinExistence type="evidence at transcript level"/>
<comment type="function">
    <text evidence="2 5 6 12 14 15 16">Versicolorin B synthase; part of the fragmented gene cluster that mediates the biosynthesis of dothistromin (DOTH), a polyketide toxin very similar in structure to the aflatoxin precursor, versicolorin B (PubMed:12039746, PubMed:17683963, PubMed:22069571, PubMed:23207690, PubMed:23448391). The first step of the pathway is the conversion of acetate to norsolorinic acid (NOR) and requires the fatty acid synthase subunits hexA and hexB, as well as the polyketide synthase pksA (PubMed:16649078, PubMed:23207690). PksA combines a hexanoyl starter unit and 7 malonyl-CoA extender units to synthesize the precursor NOR (By similarity). The hexanoyl starter unit is provided to the acyl-carrier protein (ACP) domain by the fungal fatty acid synthase hexA/hexB (By similarity). The second step is the conversion of NOR to averantin (AVN) and requires the norsolorinic acid ketoreductase nor1, which catalyzes the dehydration of norsolorinic acid to form (1'S)-averantin (PubMed:23207690). The cytochrome P450 monooxygenase avnA then catalyzes the hydroxylation of AVN to 5'hydroxyaverantin (HAVN) (PubMed:23207690). The next step is performed by adhA that transforms HAVN to averufin (AVF) (PubMed:23207690). Averufin might then be converted to hydroxyversicolorone by cypX and avfA (PubMed:23207690). Hydroxyversicolorone is further converted versiconal hemiacetal acetate (VHA) by moxY (PubMed:23207690). VHA is then the substrate for the versiconal hemiacetal acetate esterase est1 to yield versiconal (VAL) (PubMed:23207690). Versicolorin B synthase vbsA then converts VAL to versicolorin B (VERB) by closing the bisfuran ring (PubMed:16649078, PubMed:23207690). Then, the activity of the versicolorin B desaturase verB leads to versicolorin A (VERA) (PubMed:23207690). DotB, a predicted chloroperoxidase, may perform epoxidation of the A-ring of VERA (PubMed:23207690). Alternatively, a cytochrome P450, such as cypX or avnA could catalyze this step (PubMed:23207690). It is also possible that another, uncharacterized, cytochrome P450 enzyme is responsible for this step (PubMed:23207690). Opening of the epoxide could potentially be achieved by the epoxide hydrolase epoA (PubMed:23207690). However, epoA seems not to be required for DOTH biosynthesis, but other epoxide hydrolases may have the ability to complement this hydrolysis (PubMed:23207690). Alternatively, opening of the epoxide ring could be achieved non-enzymatically (PubMed:23207690). The next step is the deoxygenation of ring A to yield the 5,8-dihydroxyanthraquinone which is most likely catalyzed by the NADPH dehydrogenase encoded by ver1 (PubMed:23207690). The last stages of DOTH biosynthesis are proposed to involve hydroxylation of the bisfuran (PubMed:23207690). OrdB and norB might have oxidative roles here (PubMed:23207690). An alternative possibility is that cytochrome P450 monoogenases such as avnA and cypX might perform these steps in addition to previously proposed steps (PubMed:23207690).</text>
</comment>
<comment type="catalytic activity">
    <reaction evidence="2">
        <text>(2S-3S)-versiconal hemiacetal = versicolorin B + H2O</text>
        <dbReference type="Rhea" id="RHEA:33859"/>
        <dbReference type="ChEBI" id="CHEBI:15377"/>
        <dbReference type="ChEBI" id="CHEBI:77950"/>
        <dbReference type="ChEBI" id="CHEBI:77951"/>
        <dbReference type="EC" id="4.2.1.143"/>
    </reaction>
</comment>
<comment type="catalytic activity">
    <reaction evidence="2">
        <text>(S)-5'-oxoaverantin + H(+) = (1'S,5'S)-averufin + H2O</text>
        <dbReference type="Rhea" id="RHEA:35671"/>
        <dbReference type="ChEBI" id="CHEBI:15377"/>
        <dbReference type="ChEBI" id="CHEBI:15378"/>
        <dbReference type="ChEBI" id="CHEBI:71537"/>
        <dbReference type="ChEBI" id="CHEBI:77933"/>
        <dbReference type="EC" id="4.2.1.142"/>
    </reaction>
</comment>
<comment type="cofactor">
    <cofactor evidence="1">
        <name>FAD</name>
        <dbReference type="ChEBI" id="CHEBI:57692"/>
    </cofactor>
</comment>
<comment type="pathway">
    <text evidence="12 15">Mycotoxin biosynthesis.</text>
</comment>
<comment type="subunit">
    <text evidence="2">Homodimer.</text>
</comment>
<comment type="subcellular location">
    <subcellularLocation>
        <location evidence="2">Cytoplasm</location>
        <location evidence="2">Cytosol</location>
    </subcellularLocation>
</comment>
<comment type="induction">
    <text evidence="7 8 9 10">Expression is positively regulated by the dothistromin-specific transcription factors aflR and aflJ (PubMed:23207690, PubMed:25986547). Dothistromin biosynthetic proteins are co-regulated, showing a high level of expression at ealy exponential phase with a subsequent decline in older cultures (PubMed:17683963, PubMed:18262779).</text>
</comment>
<comment type="disruption phenotype">
    <text evidence="7">Impairs the production of dothistromin (PubMed:18262779).</text>
</comment>
<comment type="similarity">
    <text evidence="13">Belongs to the GMC oxidoreductase family.</text>
</comment>
<name>VBSA_DOTSE</name>